<comment type="function">
    <text evidence="1 3">Nicotinamide/nicotinate-nucleotide adenylyltransferase that acts as an axon maintenance factor (By similarity). Axon survival factor required for the maintenance of healthy axons: acts by delaying Wallerian axon degeneration, an evolutionarily conserved process that drives the loss of damaged axons (By similarity). Catalyzes the formation of NAD(+) from nicotinamide mononucleotide (NMN) and ATP. Can also use the deamidated form; nicotinic acid mononucleotide (NaMN) as substrate but with a lower efficiency. Cannot use triazofurin monophosphate (TrMP) as substrate. Also catalyzes the reverse reaction, i.e. the pyrophosphorolytic cleavage of NAD(+). For the pyrophosphorolytic activity prefers NAD(+), NADH and NaAD as substrates and degrades nicotinic acid adenine dinucleotide phosphate (NHD) less effectively. Fails to cleave phosphorylated dinucleotides NADP(+), NADPH and NaADP(+). Also acts as an activator of ADP-ribosylation by supporting the catalytic activity of PARP16 and promoting mono-ADP-ribosylation of ribosomes by PARP16 (By similarity). May be involved in the maintenance of axonal integrity (By similarity).</text>
</comment>
<comment type="catalytic activity">
    <reaction evidence="3">
        <text>beta-nicotinamide D-ribonucleotide + ATP + H(+) = diphosphate + NAD(+)</text>
        <dbReference type="Rhea" id="RHEA:21360"/>
        <dbReference type="ChEBI" id="CHEBI:14649"/>
        <dbReference type="ChEBI" id="CHEBI:15378"/>
        <dbReference type="ChEBI" id="CHEBI:30616"/>
        <dbReference type="ChEBI" id="CHEBI:33019"/>
        <dbReference type="ChEBI" id="CHEBI:57540"/>
        <dbReference type="EC" id="2.7.7.1"/>
    </reaction>
    <physiologicalReaction direction="left-to-right" evidence="3">
        <dbReference type="Rhea" id="RHEA:21361"/>
    </physiologicalReaction>
    <physiologicalReaction direction="right-to-left" evidence="3">
        <dbReference type="Rhea" id="RHEA:21362"/>
    </physiologicalReaction>
</comment>
<comment type="catalytic activity">
    <reaction evidence="3">
        <text>nicotinate beta-D-ribonucleotide + ATP + H(+) = deamido-NAD(+) + diphosphate</text>
        <dbReference type="Rhea" id="RHEA:22860"/>
        <dbReference type="ChEBI" id="CHEBI:15378"/>
        <dbReference type="ChEBI" id="CHEBI:30616"/>
        <dbReference type="ChEBI" id="CHEBI:33019"/>
        <dbReference type="ChEBI" id="CHEBI:57502"/>
        <dbReference type="ChEBI" id="CHEBI:58437"/>
        <dbReference type="EC" id="2.7.7.18"/>
    </reaction>
    <physiologicalReaction direction="left-to-right" evidence="3">
        <dbReference type="Rhea" id="RHEA:22861"/>
    </physiologicalReaction>
    <physiologicalReaction direction="right-to-left" evidence="3">
        <dbReference type="Rhea" id="RHEA:22862"/>
    </physiologicalReaction>
</comment>
<comment type="cofactor">
    <cofactor evidence="3">
        <name>Mg(2+)</name>
        <dbReference type="ChEBI" id="CHEBI:18420"/>
    </cofactor>
    <text evidence="3">Divalent metal cations. Mg(2+) confers the highest activity.</text>
</comment>
<comment type="activity regulation">
    <text evidence="3">Inhibited by P1-(adenosine-5')-P3-(nicotinamide-riboside-5')-triphosphate (Np3AD) and P1-(adenosine-5')-P4-(nicotinamide-riboside-5')-tetraphosphate (Np4AD).</text>
</comment>
<comment type="pathway">
    <text evidence="3">Cofactor biosynthesis; NAD(+) biosynthesis; NAD(+) from nicotinamide D-ribonucleotide: step 1/1.</text>
</comment>
<comment type="pathway">
    <text evidence="3">Cofactor biosynthesis; NAD(+) biosynthesis; deamido-NAD(+) from nicotinate D-ribonucleotide: step 1/1.</text>
</comment>
<comment type="subunit">
    <text evidence="3">Monomer.</text>
</comment>
<comment type="subcellular location">
    <subcellularLocation>
        <location evidence="1">Golgi apparatus membrane</location>
        <topology evidence="1">Lipid-anchor</topology>
    </subcellularLocation>
    <subcellularLocation>
        <location evidence="1">Cytoplasmic vesicle membrane</location>
        <topology evidence="1">Lipid-anchor</topology>
    </subcellularLocation>
    <subcellularLocation>
        <location evidence="3">Cytoplasm</location>
    </subcellularLocation>
    <subcellularLocation>
        <location evidence="1">Cell projection</location>
        <location evidence="1">Axon</location>
    </subcellularLocation>
    <text evidence="1">Delivered to axons with Golgi-derived cytoplasmic vesicles.</text>
</comment>
<comment type="PTM">
    <text evidence="1 3">Degraded in response to injured neurite (By similarity). Degradation is caused by polyubiquitination by MYCBP2 after recognition by FBXO45 (By similarity).</text>
</comment>
<comment type="PTM">
    <text evidence="1">Palmitoylated; palmitoylation is required for membrane association.</text>
</comment>
<comment type="similarity">
    <text evidence="4">Belongs to the eukaryotic NMN adenylyltransferase family.</text>
</comment>
<sequence>MTETTKTHVILLACGSFNPITKGHIQMFERARDYLHKTGRFIVIGGIVSPVHDSYGKQGLVSSRHRLIMCQLAVQNSDWIRVDPWECYQDTWQTTCSVLEHHRDLMKRVTGCILSNVNTPSMTPVIGQPQNETPQPIYQNSNVPTKPTAAKILGKVGESLSRICCVRPPVERFTFVDENANLGTVMRYEEIELRILLLCGSDLLESFCIPGLWNEADMEVIVGDFGIVVVPRDAADTDRIMNHSSILRKYKNNIMVVKDDINHPMSVVSSTKSRLALQHGDGHVVDYLSQPVIDYILKSQLYINASG</sequence>
<gene>
    <name type="primary">NMNAT2</name>
</gene>
<organism>
    <name type="scientific">Pongo abelii</name>
    <name type="common">Sumatran orangutan</name>
    <name type="synonym">Pongo pygmaeus abelii</name>
    <dbReference type="NCBI Taxonomy" id="9601"/>
    <lineage>
        <taxon>Eukaryota</taxon>
        <taxon>Metazoa</taxon>
        <taxon>Chordata</taxon>
        <taxon>Craniata</taxon>
        <taxon>Vertebrata</taxon>
        <taxon>Euteleostomi</taxon>
        <taxon>Mammalia</taxon>
        <taxon>Eutheria</taxon>
        <taxon>Euarchontoglires</taxon>
        <taxon>Primates</taxon>
        <taxon>Haplorrhini</taxon>
        <taxon>Catarrhini</taxon>
        <taxon>Hominidae</taxon>
        <taxon>Pongo</taxon>
    </lineage>
</organism>
<name>NMNA2_PONAB</name>
<evidence type="ECO:0000250" key="1">
    <source>
        <dbReference type="UniProtKB" id="Q8BNJ3"/>
    </source>
</evidence>
<evidence type="ECO:0000250" key="2">
    <source>
        <dbReference type="UniProtKB" id="Q96T66"/>
    </source>
</evidence>
<evidence type="ECO:0000250" key="3">
    <source>
        <dbReference type="UniProtKB" id="Q9BZQ4"/>
    </source>
</evidence>
<evidence type="ECO:0000305" key="4"/>
<dbReference type="EC" id="2.7.7.1" evidence="3"/>
<dbReference type="EC" id="2.7.7.18" evidence="3"/>
<dbReference type="EMBL" id="CR858625">
    <property type="protein sequence ID" value="CAH90845.1"/>
    <property type="molecule type" value="mRNA"/>
</dbReference>
<dbReference type="RefSeq" id="NP_001125482.1">
    <property type="nucleotide sequence ID" value="NM_001132010.1"/>
</dbReference>
<dbReference type="SMR" id="Q5RBL5"/>
<dbReference type="FunCoup" id="Q5RBL5">
    <property type="interactions" value="258"/>
</dbReference>
<dbReference type="STRING" id="9601.ENSPPYP00000000486"/>
<dbReference type="Ensembl" id="ENSPPYT00000037146.1">
    <property type="protein sequence ID" value="ENSPPYP00000035803.1"/>
    <property type="gene ID" value="ENSPPYG00000038223.1"/>
</dbReference>
<dbReference type="GeneID" id="100172391"/>
<dbReference type="KEGG" id="pon:100172391"/>
<dbReference type="CTD" id="23057"/>
<dbReference type="eggNOG" id="KOG3199">
    <property type="taxonomic scope" value="Eukaryota"/>
</dbReference>
<dbReference type="GeneTree" id="ENSGT00950000183179"/>
<dbReference type="HOGENOM" id="CLU_033366_1_0_1"/>
<dbReference type="InParanoid" id="Q5RBL5"/>
<dbReference type="OMA" id="QPWKENI"/>
<dbReference type="OrthoDB" id="422187at2759"/>
<dbReference type="UniPathway" id="UPA00253">
    <property type="reaction ID" value="UER00332"/>
</dbReference>
<dbReference type="UniPathway" id="UPA00253">
    <property type="reaction ID" value="UER00600"/>
</dbReference>
<dbReference type="Proteomes" id="UP000001595">
    <property type="component" value="Chromosome 1"/>
</dbReference>
<dbReference type="GO" id="GO:0030424">
    <property type="term" value="C:axon"/>
    <property type="evidence" value="ECO:0007669"/>
    <property type="project" value="UniProtKB-SubCell"/>
</dbReference>
<dbReference type="GO" id="GO:0030659">
    <property type="term" value="C:cytoplasmic vesicle membrane"/>
    <property type="evidence" value="ECO:0007669"/>
    <property type="project" value="UniProtKB-SubCell"/>
</dbReference>
<dbReference type="GO" id="GO:0005829">
    <property type="term" value="C:cytosol"/>
    <property type="evidence" value="ECO:0007669"/>
    <property type="project" value="Ensembl"/>
</dbReference>
<dbReference type="GO" id="GO:0000139">
    <property type="term" value="C:Golgi membrane"/>
    <property type="evidence" value="ECO:0007669"/>
    <property type="project" value="UniProtKB-SubCell"/>
</dbReference>
<dbReference type="GO" id="GO:0005770">
    <property type="term" value="C:late endosome"/>
    <property type="evidence" value="ECO:0007669"/>
    <property type="project" value="Ensembl"/>
</dbReference>
<dbReference type="GO" id="GO:0045202">
    <property type="term" value="C:synapse"/>
    <property type="evidence" value="ECO:0007669"/>
    <property type="project" value="Ensembl"/>
</dbReference>
<dbReference type="GO" id="GO:0005802">
    <property type="term" value="C:trans-Golgi network"/>
    <property type="evidence" value="ECO:0007669"/>
    <property type="project" value="Ensembl"/>
</dbReference>
<dbReference type="GO" id="GO:0005524">
    <property type="term" value="F:ATP binding"/>
    <property type="evidence" value="ECO:0007669"/>
    <property type="project" value="UniProtKB-KW"/>
</dbReference>
<dbReference type="GO" id="GO:0000309">
    <property type="term" value="F:nicotinamide-nucleotide adenylyltransferase activity"/>
    <property type="evidence" value="ECO:0007669"/>
    <property type="project" value="UniProtKB-EC"/>
</dbReference>
<dbReference type="GO" id="GO:0004515">
    <property type="term" value="F:nicotinate-nucleotide adenylyltransferase activity"/>
    <property type="evidence" value="ECO:0007669"/>
    <property type="project" value="UniProtKB-EC"/>
</dbReference>
<dbReference type="GO" id="GO:0140768">
    <property type="term" value="F:protein ADP-ribosyltransferase-substrate adaptor activity"/>
    <property type="evidence" value="ECO:0000250"/>
    <property type="project" value="UniProtKB"/>
</dbReference>
<dbReference type="GO" id="GO:0009435">
    <property type="term" value="P:NAD biosynthetic process"/>
    <property type="evidence" value="ECO:0007669"/>
    <property type="project" value="UniProtKB-UniPathway"/>
</dbReference>
<dbReference type="GO" id="GO:2000766">
    <property type="term" value="P:negative regulation of cytoplasmic translation"/>
    <property type="evidence" value="ECO:0007669"/>
    <property type="project" value="Ensembl"/>
</dbReference>
<dbReference type="GO" id="GO:1990535">
    <property type="term" value="P:neuron projection maintenance"/>
    <property type="evidence" value="ECO:0007669"/>
    <property type="project" value="Ensembl"/>
</dbReference>
<dbReference type="CDD" id="cd09286">
    <property type="entry name" value="NMNAT_Eukarya"/>
    <property type="match status" value="1"/>
</dbReference>
<dbReference type="FunFam" id="3.40.50.620:FF:000080">
    <property type="entry name" value="Nicotinamide/nicotinic acid mononucleotide adenylyltransferase 2"/>
    <property type="match status" value="1"/>
</dbReference>
<dbReference type="Gene3D" id="3.40.50.620">
    <property type="entry name" value="HUPs"/>
    <property type="match status" value="1"/>
</dbReference>
<dbReference type="InterPro" id="IPR004821">
    <property type="entry name" value="Cyt_trans-like"/>
</dbReference>
<dbReference type="InterPro" id="IPR051182">
    <property type="entry name" value="Euk_NMN_adenylyltrnsfrase"/>
</dbReference>
<dbReference type="InterPro" id="IPR045094">
    <property type="entry name" value="NMNAT_euk"/>
</dbReference>
<dbReference type="InterPro" id="IPR014729">
    <property type="entry name" value="Rossmann-like_a/b/a_fold"/>
</dbReference>
<dbReference type="PANTHER" id="PTHR12039">
    <property type="entry name" value="NICOTINAMIDE MONONUCLEOTIDE ADENYLYLTRANSFERASE"/>
    <property type="match status" value="1"/>
</dbReference>
<dbReference type="PANTHER" id="PTHR12039:SF18">
    <property type="entry name" value="NICOTINAMIDE_NICOTINIC ACID MONONUCLEOTIDE ADENYLYLTRANSFERASE 2"/>
    <property type="match status" value="1"/>
</dbReference>
<dbReference type="Pfam" id="PF01467">
    <property type="entry name" value="CTP_transf_like"/>
    <property type="match status" value="1"/>
</dbReference>
<dbReference type="SUPFAM" id="SSF52374">
    <property type="entry name" value="Nucleotidylyl transferase"/>
    <property type="match status" value="1"/>
</dbReference>
<feature type="chain" id="PRO_0000328661" description="Nicotinamide/nicotinic acid mononucleotide adenylyltransferase 2">
    <location>
        <begin position="1"/>
        <end position="307"/>
    </location>
</feature>
<feature type="binding site" evidence="2">
    <location>
        <position position="16"/>
    </location>
    <ligand>
        <name>NAD(+)</name>
        <dbReference type="ChEBI" id="CHEBI:57540"/>
    </ligand>
</feature>
<feature type="binding site" evidence="2">
    <location>
        <position position="17"/>
    </location>
    <ligand>
        <name>NAD(+)</name>
        <dbReference type="ChEBI" id="CHEBI:57540"/>
    </ligand>
</feature>
<feature type="binding site" description="in other chain" evidence="2">
    <location>
        <position position="24"/>
    </location>
    <ligand>
        <name>ATP</name>
        <dbReference type="ChEBI" id="CHEBI:30616"/>
        <note>ligand shared between dimeric partners</note>
    </ligand>
</feature>
<feature type="binding site" evidence="2">
    <location>
        <position position="92"/>
    </location>
    <ligand>
        <name>NAD(+)</name>
        <dbReference type="ChEBI" id="CHEBI:57540"/>
    </ligand>
</feature>
<feature type="binding site" evidence="2">
    <location>
        <position position="95"/>
    </location>
    <ligand>
        <name>NAD(+)</name>
        <dbReference type="ChEBI" id="CHEBI:57540"/>
    </ligand>
</feature>
<feature type="binding site" evidence="2">
    <location>
        <position position="200"/>
    </location>
    <ligand>
        <name>NAD(+)</name>
        <dbReference type="ChEBI" id="CHEBI:57540"/>
    </ligand>
</feature>
<feature type="binding site" evidence="2">
    <location>
        <position position="202"/>
    </location>
    <ligand>
        <name>NAD(+)</name>
        <dbReference type="ChEBI" id="CHEBI:57540"/>
    </ligand>
</feature>
<feature type="binding site" evidence="2">
    <location>
        <position position="212"/>
    </location>
    <ligand>
        <name>NAD(+)</name>
        <dbReference type="ChEBI" id="CHEBI:57540"/>
    </ligand>
</feature>
<feature type="binding site" evidence="2">
    <location>
        <position position="213"/>
    </location>
    <ligand>
        <name>NAD(+)</name>
        <dbReference type="ChEBI" id="CHEBI:57540"/>
    </ligand>
</feature>
<feature type="binding site" evidence="2">
    <location>
        <position position="232"/>
    </location>
    <ligand>
        <name>NAD(+)</name>
        <dbReference type="ChEBI" id="CHEBI:57540"/>
    </ligand>
</feature>
<feature type="binding site" description="in other chain" evidence="2">
    <location>
        <begin position="271"/>
        <end position="274"/>
    </location>
    <ligand>
        <name>ATP</name>
        <dbReference type="ChEBI" id="CHEBI:30616"/>
        <note>ligand shared between dimeric partners</note>
    </ligand>
</feature>
<feature type="lipid moiety-binding region" description="S-palmitoyl cysteine" evidence="1">
    <location>
        <position position="164"/>
    </location>
</feature>
<feature type="lipid moiety-binding region" description="S-palmitoyl cysteine" evidence="1">
    <location>
        <position position="165"/>
    </location>
</feature>
<reference key="1">
    <citation type="submission" date="2004-11" db="EMBL/GenBank/DDBJ databases">
        <authorList>
            <consortium name="The German cDNA consortium"/>
        </authorList>
    </citation>
    <scope>NUCLEOTIDE SEQUENCE [LARGE SCALE MRNA]</scope>
    <source>
        <tissue>Brain cortex</tissue>
    </source>
</reference>
<accession>Q5RBL5</accession>
<keyword id="KW-0067">ATP-binding</keyword>
<keyword id="KW-0966">Cell projection</keyword>
<keyword id="KW-0963">Cytoplasm</keyword>
<keyword id="KW-0968">Cytoplasmic vesicle</keyword>
<keyword id="KW-0333">Golgi apparatus</keyword>
<keyword id="KW-0449">Lipoprotein</keyword>
<keyword id="KW-0472">Membrane</keyword>
<keyword id="KW-0520">NAD</keyword>
<keyword id="KW-0547">Nucleotide-binding</keyword>
<keyword id="KW-0548">Nucleotidyltransferase</keyword>
<keyword id="KW-0564">Palmitate</keyword>
<keyword id="KW-0662">Pyridine nucleotide biosynthesis</keyword>
<keyword id="KW-1185">Reference proteome</keyword>
<keyword id="KW-0808">Transferase</keyword>
<keyword id="KW-0832">Ubl conjugation</keyword>
<proteinExistence type="evidence at transcript level"/>
<protein>
    <recommendedName>
        <fullName evidence="4">Nicotinamide/nicotinic acid mononucleotide adenylyltransferase 2</fullName>
        <shortName>NMN/NaMN adenylyltransferase 2</shortName>
        <ecNumber evidence="3">2.7.7.1</ecNumber>
        <ecNumber evidence="3">2.7.7.18</ecNumber>
    </recommendedName>
    <alternativeName>
        <fullName>Nicotinamide mononucleotide adenylyltransferase 2</fullName>
        <shortName>NMN adenylyltransferase 2</shortName>
    </alternativeName>
    <alternativeName>
        <fullName>Nicotinate-nucleotide adenylyltransferase 2</fullName>
        <shortName>NaMN adenylyltransferase 2</shortName>
    </alternativeName>
</protein>